<evidence type="ECO:0000255" key="1">
    <source>
        <dbReference type="HAMAP-Rule" id="MF_00256"/>
    </source>
</evidence>
<evidence type="ECO:0000256" key="2">
    <source>
        <dbReference type="SAM" id="MobiDB-lite"/>
    </source>
</evidence>
<evidence type="ECO:0000305" key="3"/>
<feature type="chain" id="PRO_1000003426" description="Large ribosomal subunit protein eL15">
    <location>
        <begin position="1"/>
        <end position="194"/>
    </location>
</feature>
<feature type="region of interest" description="Disordered" evidence="2">
    <location>
        <begin position="161"/>
        <end position="194"/>
    </location>
</feature>
<comment type="similarity">
    <text evidence="1">Belongs to the eukaryotic ribosomal protein eL15 family.</text>
</comment>
<reference key="1">
    <citation type="submission" date="2007-03" db="EMBL/GenBank/DDBJ databases">
        <title>Complete sequence of chromosome of Methanococcus maripaludis C5.</title>
        <authorList>
            <consortium name="US DOE Joint Genome Institute"/>
            <person name="Copeland A."/>
            <person name="Lucas S."/>
            <person name="Lapidus A."/>
            <person name="Barry K."/>
            <person name="Glavina del Rio T."/>
            <person name="Dalin E."/>
            <person name="Tice H."/>
            <person name="Pitluck S."/>
            <person name="Chertkov O."/>
            <person name="Brettin T."/>
            <person name="Bruce D."/>
            <person name="Han C."/>
            <person name="Detter J.C."/>
            <person name="Schmutz J."/>
            <person name="Larimer F."/>
            <person name="Land M."/>
            <person name="Hauser L."/>
            <person name="Kyrpides N."/>
            <person name="Mikhailova N."/>
            <person name="Sieprawska-Lupa M."/>
            <person name="Whitman W.B."/>
            <person name="Richardson P."/>
        </authorList>
    </citation>
    <scope>NUCLEOTIDE SEQUENCE [LARGE SCALE GENOMIC DNA]</scope>
    <source>
        <strain>C5 / ATCC BAA-1333</strain>
    </source>
</reference>
<gene>
    <name evidence="1" type="primary">rpl15e</name>
    <name type="ordered locus">MmarC5_1375</name>
</gene>
<accession>A4FZN9</accession>
<name>RL15E_METM5</name>
<organism>
    <name type="scientific">Methanococcus maripaludis (strain C5 / ATCC BAA-1333)</name>
    <dbReference type="NCBI Taxonomy" id="402880"/>
    <lineage>
        <taxon>Archaea</taxon>
        <taxon>Methanobacteriati</taxon>
        <taxon>Methanobacteriota</taxon>
        <taxon>Methanomada group</taxon>
        <taxon>Methanococci</taxon>
        <taxon>Methanococcales</taxon>
        <taxon>Methanococcaceae</taxon>
        <taxon>Methanococcus</taxon>
    </lineage>
</organism>
<dbReference type="EMBL" id="CP000609">
    <property type="protein sequence ID" value="ABO35673.1"/>
    <property type="molecule type" value="Genomic_DNA"/>
</dbReference>
<dbReference type="RefSeq" id="WP_011869124.1">
    <property type="nucleotide sequence ID" value="NC_009135.1"/>
</dbReference>
<dbReference type="SMR" id="A4FZN9"/>
<dbReference type="STRING" id="402880.MmarC5_1375"/>
<dbReference type="GeneID" id="4927615"/>
<dbReference type="KEGG" id="mmq:MmarC5_1375"/>
<dbReference type="eggNOG" id="arCOG04209">
    <property type="taxonomic scope" value="Archaea"/>
</dbReference>
<dbReference type="HOGENOM" id="CLU_080796_0_0_2"/>
<dbReference type="OrthoDB" id="8183at2157"/>
<dbReference type="Proteomes" id="UP000000253">
    <property type="component" value="Chromosome"/>
</dbReference>
<dbReference type="GO" id="GO:0022625">
    <property type="term" value="C:cytosolic large ribosomal subunit"/>
    <property type="evidence" value="ECO:0007669"/>
    <property type="project" value="TreeGrafter"/>
</dbReference>
<dbReference type="GO" id="GO:0003723">
    <property type="term" value="F:RNA binding"/>
    <property type="evidence" value="ECO:0007669"/>
    <property type="project" value="TreeGrafter"/>
</dbReference>
<dbReference type="GO" id="GO:0003735">
    <property type="term" value="F:structural constituent of ribosome"/>
    <property type="evidence" value="ECO:0007669"/>
    <property type="project" value="InterPro"/>
</dbReference>
<dbReference type="GO" id="GO:0002181">
    <property type="term" value="P:cytoplasmic translation"/>
    <property type="evidence" value="ECO:0007669"/>
    <property type="project" value="TreeGrafter"/>
</dbReference>
<dbReference type="FunFam" id="3.40.1120.10:FF:000002">
    <property type="entry name" value="50S ribosomal protein L15e"/>
    <property type="match status" value="1"/>
</dbReference>
<dbReference type="Gene3D" id="3.40.1120.10">
    <property type="entry name" value="Ribosomal protein l15e"/>
    <property type="match status" value="1"/>
</dbReference>
<dbReference type="HAMAP" id="MF_00256">
    <property type="entry name" value="Ribosomal_eL15"/>
    <property type="match status" value="1"/>
</dbReference>
<dbReference type="InterPro" id="IPR024794">
    <property type="entry name" value="Rbsml_eL15_core_dom_sf"/>
</dbReference>
<dbReference type="InterPro" id="IPR000439">
    <property type="entry name" value="Ribosomal_eL15"/>
</dbReference>
<dbReference type="InterPro" id="IPR020926">
    <property type="entry name" value="Ribosomal_eL15_arc"/>
</dbReference>
<dbReference type="InterPro" id="IPR020925">
    <property type="entry name" value="Ribosomal_eL15_CS"/>
</dbReference>
<dbReference type="InterPro" id="IPR012678">
    <property type="entry name" value="Ribosomal_uL23/eL15/eS24_sf"/>
</dbReference>
<dbReference type="NCBIfam" id="NF003269">
    <property type="entry name" value="PRK04243.1"/>
    <property type="match status" value="1"/>
</dbReference>
<dbReference type="PANTHER" id="PTHR11847:SF4">
    <property type="entry name" value="LARGE RIBOSOMAL SUBUNIT PROTEIN EL15"/>
    <property type="match status" value="1"/>
</dbReference>
<dbReference type="PANTHER" id="PTHR11847">
    <property type="entry name" value="RIBOSOMAL PROTEIN L15"/>
    <property type="match status" value="1"/>
</dbReference>
<dbReference type="Pfam" id="PF00827">
    <property type="entry name" value="Ribosomal_L15e"/>
    <property type="match status" value="1"/>
</dbReference>
<dbReference type="SMART" id="SM01384">
    <property type="entry name" value="Ribosomal_L15e"/>
    <property type="match status" value="1"/>
</dbReference>
<dbReference type="SUPFAM" id="SSF54189">
    <property type="entry name" value="Ribosomal proteins S24e, L23 and L15e"/>
    <property type="match status" value="1"/>
</dbReference>
<dbReference type="PROSITE" id="PS01194">
    <property type="entry name" value="RIBOSOMAL_L15E"/>
    <property type="match status" value="1"/>
</dbReference>
<keyword id="KW-0687">Ribonucleoprotein</keyword>
<keyword id="KW-0689">Ribosomal protein</keyword>
<proteinExistence type="inferred from homology"/>
<protein>
    <recommendedName>
        <fullName evidence="1">Large ribosomal subunit protein eL15</fullName>
    </recommendedName>
    <alternativeName>
        <fullName evidence="3">50S ribosomal protein L15e</fullName>
    </alternativeName>
</protein>
<sequence>MSMYNYVKEAWKVPANSYVKELQWARMQDWRKEPSVIRIERPTRIDRARNLGYKAKQGIVVVRVSVRRGGLRKPRPKHSKKPATMGINKITMAKSIQRIAEERAAKKYPNMEVLNSYWVGQDGKQKWYEVILVDPCQPSIKNDKSYNWLCKGTHKGRVTRGLTSAGKKGRGLMYKGKGAEKARPSVRANGKKTK</sequence>